<protein>
    <recommendedName>
        <fullName evidence="5">Rifampicin phosphotransferase</fullName>
        <ecNumber evidence="3">2.7.9.6</ecNumber>
    </recommendedName>
    <alternativeName>
        <fullName evidence="5">Rifampin phosphotransferase</fullName>
        <shortName evidence="4">RIF phosphotransferase</shortName>
    </alternativeName>
</protein>
<feature type="chain" id="PRO_0000459648" description="Rifampicin phosphotransferase">
    <location>
        <begin position="1"/>
        <end position="865"/>
    </location>
</feature>
<feature type="region of interest" description="ATP-binding" evidence="1">
    <location>
        <begin position="2"/>
        <end position="314"/>
    </location>
</feature>
<feature type="region of interest" description="Rifampicin-binding" evidence="1">
    <location>
        <begin position="327"/>
        <end position="752"/>
    </location>
</feature>
<feature type="region of interest" description="Disordered" evidence="2">
    <location>
        <begin position="403"/>
        <end position="430"/>
    </location>
</feature>
<feature type="region of interest" description="Swivel phosphohistidine" evidence="1">
    <location>
        <begin position="765"/>
        <end position="863"/>
    </location>
</feature>
<feature type="compositionally biased region" description="Low complexity" evidence="2">
    <location>
        <begin position="409"/>
        <end position="424"/>
    </location>
</feature>
<feature type="active site" description="Tele-phosphohistidine intermediate" evidence="1">
    <location>
        <position position="823"/>
    </location>
</feature>
<feature type="binding site" evidence="1">
    <location>
        <position position="23"/>
    </location>
    <ligand>
        <name>ATP</name>
        <dbReference type="ChEBI" id="CHEBI:30616"/>
    </ligand>
</feature>
<feature type="binding site" evidence="1">
    <location>
        <position position="117"/>
    </location>
    <ligand>
        <name>ATP</name>
        <dbReference type="ChEBI" id="CHEBI:30616"/>
    </ligand>
</feature>
<feature type="binding site" evidence="1">
    <location>
        <position position="132"/>
    </location>
    <ligand>
        <name>ATP</name>
        <dbReference type="ChEBI" id="CHEBI:30616"/>
    </ligand>
</feature>
<feature type="binding site" evidence="1">
    <location>
        <position position="136"/>
    </location>
    <ligand>
        <name>ATP</name>
        <dbReference type="ChEBI" id="CHEBI:30616"/>
    </ligand>
</feature>
<feature type="binding site" evidence="1">
    <location>
        <position position="183"/>
    </location>
    <ligand>
        <name>ATP</name>
        <dbReference type="ChEBI" id="CHEBI:30616"/>
    </ligand>
</feature>
<feature type="binding site" evidence="1">
    <location>
        <position position="297"/>
    </location>
    <ligand>
        <name>ATP</name>
        <dbReference type="ChEBI" id="CHEBI:30616"/>
    </ligand>
</feature>
<feature type="binding site" evidence="1">
    <location>
        <position position="309"/>
    </location>
    <ligand>
        <name>ATP</name>
        <dbReference type="ChEBI" id="CHEBI:30616"/>
    </ligand>
</feature>
<feature type="binding site" evidence="1">
    <location>
        <position position="311"/>
    </location>
    <ligand>
        <name>ATP</name>
        <dbReference type="ChEBI" id="CHEBI:30616"/>
    </ligand>
</feature>
<proteinExistence type="evidence at protein level"/>
<dbReference type="EC" id="2.7.9.6" evidence="3"/>
<dbReference type="EMBL" id="KJ151292">
    <property type="protein sequence ID" value="AIA08936.1"/>
    <property type="molecule type" value="Genomic_DNA"/>
</dbReference>
<dbReference type="CARD" id="ARO:3000444">
    <property type="molecule name" value="rphA"/>
    <property type="mechanism identifier" value="ARO:0001004"/>
    <property type="mechanism name" value="antibiotic inactivation"/>
</dbReference>
<dbReference type="KEGG" id="ag:AIA08936"/>
<dbReference type="GO" id="GO:0005524">
    <property type="term" value="F:ATP binding"/>
    <property type="evidence" value="ECO:0007669"/>
    <property type="project" value="UniProtKB-KW"/>
</dbReference>
<dbReference type="GO" id="GO:0016301">
    <property type="term" value="F:kinase activity"/>
    <property type="evidence" value="ECO:0007669"/>
    <property type="project" value="UniProtKB-KW"/>
</dbReference>
<dbReference type="GO" id="GO:0046677">
    <property type="term" value="P:response to antibiotic"/>
    <property type="evidence" value="ECO:0007669"/>
    <property type="project" value="UniProtKB-KW"/>
</dbReference>
<dbReference type="FunFam" id="3.30.1490.20:FF:000010">
    <property type="entry name" value="Phosphoenolpyruvate synthase"/>
    <property type="match status" value="1"/>
</dbReference>
<dbReference type="FunFam" id="3.50.30.10:FF:000007">
    <property type="entry name" value="Phosphoenolpyruvate synthase"/>
    <property type="match status" value="1"/>
</dbReference>
<dbReference type="Gene3D" id="3.30.1490.20">
    <property type="entry name" value="ATP-grasp fold, A domain"/>
    <property type="match status" value="1"/>
</dbReference>
<dbReference type="Gene3D" id="3.30.470.20">
    <property type="entry name" value="ATP-grasp fold, B domain"/>
    <property type="match status" value="1"/>
</dbReference>
<dbReference type="Gene3D" id="3.50.30.10">
    <property type="entry name" value="Phosphohistidine domain"/>
    <property type="match status" value="1"/>
</dbReference>
<dbReference type="InterPro" id="IPR013815">
    <property type="entry name" value="ATP_grasp_subdomain_1"/>
</dbReference>
<dbReference type="InterPro" id="IPR008279">
    <property type="entry name" value="PEP-util_enz_mobile_dom"/>
</dbReference>
<dbReference type="InterPro" id="IPR051549">
    <property type="entry name" value="PEP_Utilizing_Enz"/>
</dbReference>
<dbReference type="InterPro" id="IPR036637">
    <property type="entry name" value="Phosphohistidine_dom_sf"/>
</dbReference>
<dbReference type="InterPro" id="IPR002192">
    <property type="entry name" value="PPDK_AMP/ATP-bd"/>
</dbReference>
<dbReference type="NCBIfam" id="NF004877">
    <property type="entry name" value="PRK06241.1-2"/>
    <property type="match status" value="1"/>
</dbReference>
<dbReference type="NCBIfam" id="NF004879">
    <property type="entry name" value="PRK06241.1-4"/>
    <property type="match status" value="1"/>
</dbReference>
<dbReference type="NCBIfam" id="NF041857">
    <property type="entry name" value="RIF_Ptrans_rph"/>
    <property type="match status" value="1"/>
</dbReference>
<dbReference type="NCBIfam" id="NF000283">
    <property type="entry name" value="RPH_KJ151292.1"/>
    <property type="match status" value="1"/>
</dbReference>
<dbReference type="PANTHER" id="PTHR43615">
    <property type="entry name" value="PHOSPHOENOLPYRUVATE SYNTHASE-RELATED"/>
    <property type="match status" value="1"/>
</dbReference>
<dbReference type="PANTHER" id="PTHR43615:SF1">
    <property type="entry name" value="PPDK_N DOMAIN-CONTAINING PROTEIN"/>
    <property type="match status" value="1"/>
</dbReference>
<dbReference type="Pfam" id="PF00391">
    <property type="entry name" value="PEP-utilizers"/>
    <property type="match status" value="1"/>
</dbReference>
<dbReference type="Pfam" id="PF01326">
    <property type="entry name" value="PPDK_N"/>
    <property type="match status" value="1"/>
</dbReference>
<dbReference type="SUPFAM" id="SSF56059">
    <property type="entry name" value="Glutathione synthetase ATP-binding domain-like"/>
    <property type="match status" value="1"/>
</dbReference>
<dbReference type="SUPFAM" id="SSF52009">
    <property type="entry name" value="Phosphohistidine domain"/>
    <property type="match status" value="1"/>
</dbReference>
<evidence type="ECO:0000250" key="1">
    <source>
        <dbReference type="UniProtKB" id="A0A0X1KHF9"/>
    </source>
</evidence>
<evidence type="ECO:0000256" key="2">
    <source>
        <dbReference type="SAM" id="MobiDB-lite"/>
    </source>
</evidence>
<evidence type="ECO:0000269" key="3">
    <source>
    </source>
</evidence>
<evidence type="ECO:0000303" key="4">
    <source>
    </source>
</evidence>
<evidence type="ECO:0000305" key="5"/>
<name>RPH_STRSQ</name>
<gene>
    <name evidence="4" type="primary">rph</name>
    <name evidence="4" type="synonym">rph4747</name>
</gene>
<organism>
    <name type="scientific">Streptomyces sp</name>
    <dbReference type="NCBI Taxonomy" id="1931"/>
    <lineage>
        <taxon>Bacteria</taxon>
        <taxon>Bacillati</taxon>
        <taxon>Actinomycetota</taxon>
        <taxon>Actinomycetes</taxon>
        <taxon>Kitasatosporales</taxon>
        <taxon>Streptomycetaceae</taxon>
        <taxon>Streptomyces</taxon>
    </lineage>
</organism>
<reference key="1">
    <citation type="journal article" date="2014" name="Proc. Natl. Acad. Sci. U.S.A.">
        <title>A rifamycin inactivating phosphotransferase family shared by environmental and pathogenic bacteria.</title>
        <authorList>
            <person name="Spanogiannopoulos P."/>
            <person name="Waglechner N."/>
            <person name="Koteva K."/>
            <person name="Wright G.D."/>
        </authorList>
    </citation>
    <scope>NUCLEOTIDE SEQUENCE [GENOMIC DNA]</scope>
    <scope>FUNCTION</scope>
    <scope>CATALYTIC ACTIVITY</scope>
    <scope>INDUCTION</scope>
    <scope>DISRUPTION PHENOTYPE</scope>
    <source>
        <strain>WAC4747</strain>
    </source>
</reference>
<sequence>MSGRLVVDLQDVDAAGLAEVGGKGAHLGELSRIDGVRVPSGFCVTTHAFRRIMAEAPESGELLDRLSRVDEGDQEAVRSLAARLRQVVGATPLPDEVAAAVTGALARHGERSAYAVRSSATAEDLPTASFAGQQDTYLNVVGTEEILRHVSRCWASLFTERAVTYRGRQGVDHRTVHMGVVVQRMVVPRASGILFTADPVTGDRRTATVDAGFGLGEALVSGLVDPDVLTVRHGEVVARTIAAKRRALHAVQGGGTRETPIEERRQREPVLTDDQAVELVALGRRIEAHFGSPQDIEWCLDDDGFHIVQSRPITTLFPVPERDDDVFRVYLSVGHQQMMTDAMKPLGLSMWRLTALAPMYEAGGRLFVDATARLAVPGSRATLLDVVGRGDPLTRDALETVLENGEFEPTPAETDGGAPPAGDGAEPDEADPSIVTELIERSRRSLAELEREIGTKSGPALFAFLREAFEEHKRVVGDPLNIRAIMAGMEATWWLNDRLEEWLGEKNAADTLTLSAPDNVTSEMGLELLDVADVVRTHPEVVAFLEGVEDDGFLDELPKVPGGAEARDAFEAYLDRYGMRCVGEIDITXPPVRERPSALVPVVLDHVRAFGPGAAARRFEDGRRRALAKEREVLERLRDLPDGERRADAARRMIRQVRAFAGYREYPKYAIVSRSFVYRQALLREADELVRAGVLADREDVHYLTFDEFEEAVRVRRVDERLVRRRKDAFRSYQALTPPRVLTSEGVALSGAYRRDDVPEGALAGLAVSAGTVEGRARVVLDMAEADLEAGDILVTRFTDPSWSPLFVGIAGLVTEVGGLMTHGAVIAREYGLAAVVGVERATRLIRDGQRIRVHGTEGYIELLS</sequence>
<comment type="function">
    <text evidence="3">Catalyzes the phosphorylation of rifampicin, also known as rifampin (RIF), leading to its inactivation (PubMed:24778229). Confers high level resistance to a variety of clinically used rifamycin antibiotics (PubMed:24778229).</text>
</comment>
<comment type="catalytic activity">
    <reaction evidence="3">
        <text>rifampicin + ATP + H2O = 21-phosphorifampicin + AMP + phosphate + 2 H(+)</text>
        <dbReference type="Rhea" id="RHEA:56304"/>
        <dbReference type="ChEBI" id="CHEBI:15377"/>
        <dbReference type="ChEBI" id="CHEBI:15378"/>
        <dbReference type="ChEBI" id="CHEBI:30616"/>
        <dbReference type="ChEBI" id="CHEBI:43474"/>
        <dbReference type="ChEBI" id="CHEBI:71365"/>
        <dbReference type="ChEBI" id="CHEBI:140195"/>
        <dbReference type="ChEBI" id="CHEBI:456215"/>
        <dbReference type="EC" id="2.7.9.6"/>
    </reaction>
    <physiologicalReaction direction="left-to-right" evidence="3">
        <dbReference type="Rhea" id="RHEA:56305"/>
    </physiologicalReaction>
</comment>
<comment type="induction">
    <text evidence="3">Up-regulated in the presence of RIF.</text>
</comment>
<comment type="domain">
    <text evidence="1">Contains three domains: an N-terminal ATP-binding domain, a large central rifampicin (RIF)-binding domain and a small C-terminal swivel phosphohistidine domain that harbors the conserved histidine residue essential for phosphate transfer.</text>
</comment>
<comment type="disruption phenotype">
    <text evidence="3">Disruption mutant fails to inactivate RIF (PubMed:24778229). Mutant displays a modest twofold decrease in RIF minimum inhibitory concentrations (MICs) compared with the wild-type strain (PubMed:24778229).</text>
</comment>
<comment type="similarity">
    <text evidence="5">Belongs to the rifampicin phosphotransferase family.</text>
</comment>
<keyword id="KW-0046">Antibiotic resistance</keyword>
<keyword id="KW-0067">ATP-binding</keyword>
<keyword id="KW-0418">Kinase</keyword>
<keyword id="KW-0547">Nucleotide-binding</keyword>
<keyword id="KW-0808">Transferase</keyword>
<accession>A0A059WGE7</accession>